<keyword id="KW-0732">Signal</keyword>
<protein>
    <recommendedName>
        <fullName>Uncharacterized protein YobH</fullName>
    </recommendedName>
</protein>
<proteinExistence type="inferred from homology"/>
<feature type="signal peptide" evidence="1">
    <location>
        <begin position="1"/>
        <end position="33"/>
    </location>
</feature>
<feature type="chain" id="PRO_0000259710" description="Uncharacterized protein YobH">
    <location>
        <begin position="34"/>
        <end position="79"/>
    </location>
</feature>
<feature type="sequence conflict" description="In Ref. 2; AAO68703." evidence="2" ref="2">
    <original>L</original>
    <variation>F</variation>
    <location>
        <position position="11"/>
    </location>
</feature>
<accession>Q83T43</accession>
<accession>Q8Z668</accession>
<name>YOBH_SALTI</name>
<reference key="1">
    <citation type="journal article" date="2001" name="Nature">
        <title>Complete genome sequence of a multiple drug resistant Salmonella enterica serovar Typhi CT18.</title>
        <authorList>
            <person name="Parkhill J."/>
            <person name="Dougan G."/>
            <person name="James K.D."/>
            <person name="Thomson N.R."/>
            <person name="Pickard D."/>
            <person name="Wain J."/>
            <person name="Churcher C.M."/>
            <person name="Mungall K.L."/>
            <person name="Bentley S.D."/>
            <person name="Holden M.T.G."/>
            <person name="Sebaihia M."/>
            <person name="Baker S."/>
            <person name="Basham D."/>
            <person name="Brooks K."/>
            <person name="Chillingworth T."/>
            <person name="Connerton P."/>
            <person name="Cronin A."/>
            <person name="Davis P."/>
            <person name="Davies R.M."/>
            <person name="Dowd L."/>
            <person name="White N."/>
            <person name="Farrar J."/>
            <person name="Feltwell T."/>
            <person name="Hamlin N."/>
            <person name="Haque A."/>
            <person name="Hien T.T."/>
            <person name="Holroyd S."/>
            <person name="Jagels K."/>
            <person name="Krogh A."/>
            <person name="Larsen T.S."/>
            <person name="Leather S."/>
            <person name="Moule S."/>
            <person name="O'Gaora P."/>
            <person name="Parry C."/>
            <person name="Quail M.A."/>
            <person name="Rutherford K.M."/>
            <person name="Simmonds M."/>
            <person name="Skelton J."/>
            <person name="Stevens K."/>
            <person name="Whitehead S."/>
            <person name="Barrell B.G."/>
        </authorList>
    </citation>
    <scope>NUCLEOTIDE SEQUENCE [LARGE SCALE GENOMIC DNA]</scope>
    <source>
        <strain>CT18</strain>
    </source>
</reference>
<reference key="2">
    <citation type="journal article" date="2003" name="J. Bacteriol.">
        <title>Comparative genomics of Salmonella enterica serovar Typhi strains Ty2 and CT18.</title>
        <authorList>
            <person name="Deng W."/>
            <person name="Liou S.-R."/>
            <person name="Plunkett G. III"/>
            <person name="Mayhew G.F."/>
            <person name="Rose D.J."/>
            <person name="Burland V."/>
            <person name="Kodoyianni V."/>
            <person name="Schwartz D.C."/>
            <person name="Blattner F.R."/>
        </authorList>
    </citation>
    <scope>NUCLEOTIDE SEQUENCE [LARGE SCALE GENOMIC DNA]</scope>
    <source>
        <strain>ATCC 700931 / Ty2</strain>
    </source>
</reference>
<organism>
    <name type="scientific">Salmonella typhi</name>
    <dbReference type="NCBI Taxonomy" id="90370"/>
    <lineage>
        <taxon>Bacteria</taxon>
        <taxon>Pseudomonadati</taxon>
        <taxon>Pseudomonadota</taxon>
        <taxon>Gammaproteobacteria</taxon>
        <taxon>Enterobacterales</taxon>
        <taxon>Enterobacteriaceae</taxon>
        <taxon>Salmonella</taxon>
    </lineage>
</organism>
<sequence>MRLIIRAIVLLALVWIGLLMSGYGILVGSKVNAAGLGLQCHYLTARGTSTAQYLHTNSGIIGFSDCPIFRKIATVVDNG</sequence>
<gene>
    <name type="primary">yobH</name>
    <name type="ordered locus">STY1971</name>
    <name type="ordered locus">t1037</name>
</gene>
<evidence type="ECO:0000255" key="1"/>
<evidence type="ECO:0000305" key="2"/>
<dbReference type="EMBL" id="AL513382">
    <property type="protein sequence ID" value="CAD05523.1"/>
    <property type="molecule type" value="Genomic_DNA"/>
</dbReference>
<dbReference type="EMBL" id="AE014613">
    <property type="protein sequence ID" value="AAO68703.1"/>
    <property type="molecule type" value="Genomic_DNA"/>
</dbReference>
<dbReference type="RefSeq" id="NP_456347.1">
    <property type="nucleotide sequence ID" value="NC_003198.1"/>
</dbReference>
<dbReference type="RefSeq" id="WP_001236782.1">
    <property type="nucleotide sequence ID" value="NZ_QXGZ01000054.1"/>
</dbReference>
<dbReference type="STRING" id="220341.gene:17585888"/>
<dbReference type="KEGG" id="stt:t1037"/>
<dbReference type="KEGG" id="sty:STY1971"/>
<dbReference type="PATRIC" id="fig|220341.7.peg.1988"/>
<dbReference type="eggNOG" id="ENOG5032T57">
    <property type="taxonomic scope" value="Bacteria"/>
</dbReference>
<dbReference type="HOGENOM" id="CLU_179882_0_0_6"/>
<dbReference type="OMA" id="WLAMLFT"/>
<dbReference type="Proteomes" id="UP000000541">
    <property type="component" value="Chromosome"/>
</dbReference>
<dbReference type="Proteomes" id="UP000002670">
    <property type="component" value="Chromosome"/>
</dbReference>
<dbReference type="InterPro" id="IPR025611">
    <property type="entry name" value="YobH"/>
</dbReference>
<dbReference type="Pfam" id="PF13996">
    <property type="entry name" value="YobH"/>
    <property type="match status" value="1"/>
</dbReference>